<organism>
    <name type="scientific">Yarrowia lipolytica (strain CLIB 122 / E 150)</name>
    <name type="common">Yeast</name>
    <name type="synonym">Candida lipolytica</name>
    <dbReference type="NCBI Taxonomy" id="284591"/>
    <lineage>
        <taxon>Eukaryota</taxon>
        <taxon>Fungi</taxon>
        <taxon>Dikarya</taxon>
        <taxon>Ascomycota</taxon>
        <taxon>Saccharomycotina</taxon>
        <taxon>Dipodascomycetes</taxon>
        <taxon>Dipodascales</taxon>
        <taxon>Dipodascales incertae sedis</taxon>
        <taxon>Yarrowia</taxon>
    </lineage>
</organism>
<gene>
    <name type="primary">BRO1</name>
    <name type="ordered locus">YALI0A18766g</name>
</gene>
<keyword id="KW-0963">Cytoplasm</keyword>
<keyword id="KW-0967">Endosome</keyword>
<keyword id="KW-0653">Protein transport</keyword>
<keyword id="KW-1185">Reference proteome</keyword>
<keyword id="KW-0813">Transport</keyword>
<protein>
    <recommendedName>
        <fullName>Vacuolar protein-sorting protein BRO1</fullName>
    </recommendedName>
    <alternativeName>
        <fullName>BRO domain-containing protein 1</fullName>
    </alternativeName>
</protein>
<reference key="1">
    <citation type="journal article" date="2004" name="Nature">
        <title>Genome evolution in yeasts.</title>
        <authorList>
            <person name="Dujon B."/>
            <person name="Sherman D."/>
            <person name="Fischer G."/>
            <person name="Durrens P."/>
            <person name="Casaregola S."/>
            <person name="Lafontaine I."/>
            <person name="de Montigny J."/>
            <person name="Marck C."/>
            <person name="Neuveglise C."/>
            <person name="Talla E."/>
            <person name="Goffard N."/>
            <person name="Frangeul L."/>
            <person name="Aigle M."/>
            <person name="Anthouard V."/>
            <person name="Babour A."/>
            <person name="Barbe V."/>
            <person name="Barnay S."/>
            <person name="Blanchin S."/>
            <person name="Beckerich J.-M."/>
            <person name="Beyne E."/>
            <person name="Bleykasten C."/>
            <person name="Boisrame A."/>
            <person name="Boyer J."/>
            <person name="Cattolico L."/>
            <person name="Confanioleri F."/>
            <person name="de Daruvar A."/>
            <person name="Despons L."/>
            <person name="Fabre E."/>
            <person name="Fairhead C."/>
            <person name="Ferry-Dumazet H."/>
            <person name="Groppi A."/>
            <person name="Hantraye F."/>
            <person name="Hennequin C."/>
            <person name="Jauniaux N."/>
            <person name="Joyet P."/>
            <person name="Kachouri R."/>
            <person name="Kerrest A."/>
            <person name="Koszul R."/>
            <person name="Lemaire M."/>
            <person name="Lesur I."/>
            <person name="Ma L."/>
            <person name="Muller H."/>
            <person name="Nicaud J.-M."/>
            <person name="Nikolski M."/>
            <person name="Oztas S."/>
            <person name="Ozier-Kalogeropoulos O."/>
            <person name="Pellenz S."/>
            <person name="Potier S."/>
            <person name="Richard G.-F."/>
            <person name="Straub M.-L."/>
            <person name="Suleau A."/>
            <person name="Swennen D."/>
            <person name="Tekaia F."/>
            <person name="Wesolowski-Louvel M."/>
            <person name="Westhof E."/>
            <person name="Wirth B."/>
            <person name="Zeniou-Meyer M."/>
            <person name="Zivanovic Y."/>
            <person name="Bolotin-Fukuhara M."/>
            <person name="Thierry A."/>
            <person name="Bouchier C."/>
            <person name="Caudron B."/>
            <person name="Scarpelli C."/>
            <person name="Gaillardin C."/>
            <person name="Weissenbach J."/>
            <person name="Wincker P."/>
            <person name="Souciet J.-L."/>
        </authorList>
    </citation>
    <scope>NUCLEOTIDE SEQUENCE [LARGE SCALE GENOMIC DNA]</scope>
    <source>
        <strain>CLIB 122 / E 150</strain>
    </source>
</reference>
<accession>Q6CGJ5</accession>
<feature type="chain" id="PRO_0000218871" description="Vacuolar protein-sorting protein BRO1">
    <location>
        <begin position="1"/>
        <end position="867"/>
    </location>
</feature>
<feature type="domain" description="BRO1" evidence="2">
    <location>
        <begin position="1"/>
        <end position="412"/>
    </location>
</feature>
<feature type="region of interest" description="Disordered" evidence="3">
    <location>
        <begin position="778"/>
        <end position="867"/>
    </location>
</feature>
<feature type="compositionally biased region" description="Low complexity" evidence="3">
    <location>
        <begin position="782"/>
        <end position="796"/>
    </location>
</feature>
<feature type="compositionally biased region" description="Polar residues" evidence="3">
    <location>
        <begin position="803"/>
        <end position="817"/>
    </location>
</feature>
<feature type="compositionally biased region" description="Low complexity" evidence="3">
    <location>
        <begin position="830"/>
        <end position="848"/>
    </location>
</feature>
<name>BRO1_YARLI</name>
<dbReference type="EMBL" id="CR382127">
    <property type="protein sequence ID" value="CAG84150.1"/>
    <property type="molecule type" value="Genomic_DNA"/>
</dbReference>
<dbReference type="RefSeq" id="XP_500217.1">
    <property type="nucleotide sequence ID" value="XM_500217.1"/>
</dbReference>
<dbReference type="SMR" id="Q6CGJ5"/>
<dbReference type="FunCoup" id="Q6CGJ5">
    <property type="interactions" value="87"/>
</dbReference>
<dbReference type="STRING" id="284591.Q6CGJ5"/>
<dbReference type="EnsemblFungi" id="CAG84150">
    <property type="protein sequence ID" value="CAG84150"/>
    <property type="gene ID" value="YALI0_A18766g"/>
</dbReference>
<dbReference type="KEGG" id="yli:2906507"/>
<dbReference type="VEuPathDB" id="FungiDB:YALI0_A18766g"/>
<dbReference type="HOGENOM" id="CLU_003661_0_0_1"/>
<dbReference type="InParanoid" id="Q6CGJ5"/>
<dbReference type="OMA" id="CHAANQS"/>
<dbReference type="OrthoDB" id="99068at4891"/>
<dbReference type="Proteomes" id="UP000001300">
    <property type="component" value="Chromosome A"/>
</dbReference>
<dbReference type="GO" id="GO:0005768">
    <property type="term" value="C:endosome"/>
    <property type="evidence" value="ECO:0000318"/>
    <property type="project" value="GO_Central"/>
</dbReference>
<dbReference type="GO" id="GO:0043328">
    <property type="term" value="P:protein transport to vacuole involved in ubiquitin-dependent protein catabolic process via the multivesicular body sorting pathway"/>
    <property type="evidence" value="ECO:0000318"/>
    <property type="project" value="GO_Central"/>
</dbReference>
<dbReference type="CDD" id="cd09242">
    <property type="entry name" value="BRO1_ScBro1_like"/>
    <property type="match status" value="1"/>
</dbReference>
<dbReference type="CDD" id="cd09237">
    <property type="entry name" value="V_ScBro1_like"/>
    <property type="match status" value="1"/>
</dbReference>
<dbReference type="Gene3D" id="1.20.120.560">
    <property type="entry name" value="alix/aip1 in complex with the ypdl late domain"/>
    <property type="match status" value="1"/>
</dbReference>
<dbReference type="Gene3D" id="1.20.140.50">
    <property type="entry name" value="alix/aip1 like domains"/>
    <property type="match status" value="1"/>
</dbReference>
<dbReference type="Gene3D" id="1.25.40.280">
    <property type="entry name" value="alix/aip1 like domains"/>
    <property type="match status" value="1"/>
</dbReference>
<dbReference type="InterPro" id="IPR025304">
    <property type="entry name" value="ALIX_V_dom"/>
</dbReference>
<dbReference type="InterPro" id="IPR004328">
    <property type="entry name" value="BRO1_dom"/>
</dbReference>
<dbReference type="InterPro" id="IPR038499">
    <property type="entry name" value="BRO1_sf"/>
</dbReference>
<dbReference type="PANTHER" id="PTHR23030">
    <property type="entry name" value="PCD6 INTERACTING PROTEIN-RELATED"/>
    <property type="match status" value="1"/>
</dbReference>
<dbReference type="PANTHER" id="PTHR23030:SF30">
    <property type="entry name" value="TYROSINE-PROTEIN PHOSPHATASE NON-RECEPTOR TYPE 23"/>
    <property type="match status" value="1"/>
</dbReference>
<dbReference type="Pfam" id="PF13949">
    <property type="entry name" value="ALIX_LYPXL_bnd"/>
    <property type="match status" value="1"/>
</dbReference>
<dbReference type="Pfam" id="PF03097">
    <property type="entry name" value="BRO1"/>
    <property type="match status" value="1"/>
</dbReference>
<dbReference type="SMART" id="SM01041">
    <property type="entry name" value="BRO1"/>
    <property type="match status" value="1"/>
</dbReference>
<dbReference type="PROSITE" id="PS51180">
    <property type="entry name" value="BRO1"/>
    <property type="match status" value="1"/>
</dbReference>
<proteinExistence type="inferred from homology"/>
<comment type="function">
    <text evidence="1">Involved in concentration and sorting of cargo proteins of the multivesicular body (MVB) for incorporation into intralumenal vesicles.</text>
</comment>
<comment type="subcellular location">
    <subcellularLocation>
        <location evidence="1">Cytoplasm</location>
    </subcellularLocation>
    <subcellularLocation>
        <location evidence="1">Endosome</location>
    </subcellularLocation>
</comment>
<comment type="similarity">
    <text evidence="4">Belongs to the BRO1 family.</text>
</comment>
<sequence>MIPLALKTTESTDWSRAIHRYIASSYGPDYAEQFREEISSFQRLRQDIRGAGRDATGRDILFRYFAQLDSLERRINAAESGMKPDFTWSDSLSQEKVTQHSISFEKANVLYQLGAILSCMGEEMSRDDSCDPKASFHAFQNAAGVFAFIADKFLHAPLPDIGQDVVRAFNKLMLAQAQEMFCQDSIAKSVSVLTDVNQEQAGKVSALTAKLCAGVGALYKAAFESFTAIQEEQKWGDKNWPLECQGKNKYFTALGSLLYAKSLQNKPSTQKFGESIGYIQKSINEFNEASMLPLPNGANKKDFNKWYRDLVSTALDLARSTLKSSEHDNDLIYHSLVPAPATLGAVEPKEVVTATPLQDMYKEEDHVRVVGRDLFTRLVPMHVLQQTSVYSEEKASLLRSEGERIEVADQKLNSALEYMGLPGELYALKKDLQSGRDSGSSAQVPAVVLGYASEVKTLDLSPLKTSRDQILTQIRDSQALIASEETESTKMKDYYKDGWTQAPSAQVNASLLSDIRRVQESLVAAGASDEKLQAQYDGVKPDIELLSRGINNPELEKLFDADSSSSKSSSGPSESLIDLDFSQGAASRDPAASSTLDKLLPSCETSFRKLQNCQKDRQAIFYEFKDKVHRDDISGVLVNSKGADDNLIFEQELEKFQPYQQRLTATINTQALLIKDLADSWEKITRDPVVKNKVTDRKRALDHSHVIVERFRKAFESWKQVKTGLDKGLEFYRDLQNMADKVNVSATQFVNARRQEGKSILSAIQSNTTNELQSQLGRLSFGSGSSSAAPTSGGAPTLPPKPQQHTGDNYGQPSTYDPSVYGPNSPFMQQPPQHQQYGQPPHHQQYGQNPPPPPQGANQNQFWNQYR</sequence>
<evidence type="ECO:0000250" key="1"/>
<evidence type="ECO:0000255" key="2">
    <source>
        <dbReference type="PROSITE-ProRule" id="PRU00526"/>
    </source>
</evidence>
<evidence type="ECO:0000256" key="3">
    <source>
        <dbReference type="SAM" id="MobiDB-lite"/>
    </source>
</evidence>
<evidence type="ECO:0000305" key="4"/>